<comment type="function">
    <text evidence="1">Catalyzes the NADPH-dependent rearrangement and reduction of 1-deoxy-D-xylulose-5-phosphate (DXP) to 2-C-methyl-D-erythritol 4-phosphate (MEP).</text>
</comment>
<comment type="catalytic activity">
    <reaction evidence="1">
        <text>2-C-methyl-D-erythritol 4-phosphate + NADP(+) = 1-deoxy-D-xylulose 5-phosphate + NADPH + H(+)</text>
        <dbReference type="Rhea" id="RHEA:13717"/>
        <dbReference type="ChEBI" id="CHEBI:15378"/>
        <dbReference type="ChEBI" id="CHEBI:57783"/>
        <dbReference type="ChEBI" id="CHEBI:57792"/>
        <dbReference type="ChEBI" id="CHEBI:58262"/>
        <dbReference type="ChEBI" id="CHEBI:58349"/>
        <dbReference type="EC" id="1.1.1.267"/>
    </reaction>
    <physiologicalReaction direction="right-to-left" evidence="1">
        <dbReference type="Rhea" id="RHEA:13719"/>
    </physiologicalReaction>
</comment>
<comment type="cofactor">
    <cofactor evidence="1">
        <name>Mg(2+)</name>
        <dbReference type="ChEBI" id="CHEBI:18420"/>
    </cofactor>
    <cofactor evidence="1">
        <name>Mn(2+)</name>
        <dbReference type="ChEBI" id="CHEBI:29035"/>
    </cofactor>
</comment>
<comment type="pathway">
    <text evidence="1">Isoprenoid biosynthesis; isopentenyl diphosphate biosynthesis via DXP pathway; isopentenyl diphosphate from 1-deoxy-D-xylulose 5-phosphate: step 1/6.</text>
</comment>
<comment type="similarity">
    <text evidence="1">Belongs to the DXR family.</text>
</comment>
<proteinExistence type="inferred from homology"/>
<reference key="1">
    <citation type="journal article" date="2001" name="Proc. Natl. Acad. Sci. U.S.A.">
        <title>Genome sequence of an industrial microorganism Streptomyces avermitilis: deducing the ability of producing secondary metabolites.</title>
        <authorList>
            <person name="Omura S."/>
            <person name="Ikeda H."/>
            <person name="Ishikawa J."/>
            <person name="Hanamoto A."/>
            <person name="Takahashi C."/>
            <person name="Shinose M."/>
            <person name="Takahashi Y."/>
            <person name="Horikawa H."/>
            <person name="Nakazawa H."/>
            <person name="Osonoe T."/>
            <person name="Kikuchi H."/>
            <person name="Shiba T."/>
            <person name="Sakaki Y."/>
            <person name="Hattori M."/>
        </authorList>
    </citation>
    <scope>NUCLEOTIDE SEQUENCE [LARGE SCALE GENOMIC DNA]</scope>
    <source>
        <strain>ATCC 31267 / DSM 46492 / JCM 5070 / NBRC 14893 / NCIMB 12804 / NRRL 8165 / MA-4680</strain>
    </source>
</reference>
<reference key="2">
    <citation type="journal article" date="2003" name="Nat. Biotechnol.">
        <title>Complete genome sequence and comparative analysis of the industrial microorganism Streptomyces avermitilis.</title>
        <authorList>
            <person name="Ikeda H."/>
            <person name="Ishikawa J."/>
            <person name="Hanamoto A."/>
            <person name="Shinose M."/>
            <person name="Kikuchi H."/>
            <person name="Shiba T."/>
            <person name="Sakaki Y."/>
            <person name="Hattori M."/>
            <person name="Omura S."/>
        </authorList>
    </citation>
    <scope>NUCLEOTIDE SEQUENCE [LARGE SCALE GENOMIC DNA]</scope>
    <source>
        <strain>ATCC 31267 / DSM 46492 / JCM 5070 / NBRC 14893 / NCIMB 12804 / NRRL 8165 / MA-4680</strain>
    </source>
</reference>
<evidence type="ECO:0000255" key="1">
    <source>
        <dbReference type="HAMAP-Rule" id="MF_00183"/>
    </source>
</evidence>
<organism>
    <name type="scientific">Streptomyces avermitilis (strain ATCC 31267 / DSM 46492 / JCM 5070 / NBRC 14893 / NCIMB 12804 / NRRL 8165 / MA-4680)</name>
    <dbReference type="NCBI Taxonomy" id="227882"/>
    <lineage>
        <taxon>Bacteria</taxon>
        <taxon>Bacillati</taxon>
        <taxon>Actinomycetota</taxon>
        <taxon>Actinomycetes</taxon>
        <taxon>Kitasatosporales</taxon>
        <taxon>Streptomycetaceae</taxon>
        <taxon>Streptomyces</taxon>
    </lineage>
</organism>
<gene>
    <name evidence="1" type="primary">dxr</name>
    <name type="ordered locus">SAV_2563</name>
</gene>
<keyword id="KW-0414">Isoprene biosynthesis</keyword>
<keyword id="KW-0464">Manganese</keyword>
<keyword id="KW-0479">Metal-binding</keyword>
<keyword id="KW-0521">NADP</keyword>
<keyword id="KW-0560">Oxidoreductase</keyword>
<keyword id="KW-1185">Reference proteome</keyword>
<accession>Q82K41</accession>
<sequence length="394" mass="41285">MILGSTGSIGTQAIDLVLRNPDRFRVTGLSAAGGRVGLLAEQAHRLRVSTVAVAREDVVPVLREALTAQYGPGEPLPEILAGADAATQLAASDCHTVLNGITGSIGLAPTLAALEAGRTLALANKESLIVGGPLVKALAKPGQIIPVDSEHAALFQALAAGTRADVRKLVVTASGGPFRGRTKAELANVSPEHALAHPTWAMGPVITINSATLVNKGLEVIEAHLLYDIPFERIEVVVHPQSYVHSMVEFTDGSTLAQATPPDMRGPIAIGLGWPERVPDAAPAFDWTKASSWEFFPLDNDAFPSVGLARHVGQLAGTAPAVFNAANEECVDAFLNGTLPFNGIMETVTRVVEEHGTPRTGTSLTVADVLEAETWARARARELTVQTATAEARA</sequence>
<feature type="chain" id="PRO_0000163714" description="1-deoxy-D-xylulose 5-phosphate reductoisomerase">
    <location>
        <begin position="1"/>
        <end position="394"/>
    </location>
</feature>
<feature type="binding site" evidence="1">
    <location>
        <position position="6"/>
    </location>
    <ligand>
        <name>NADPH</name>
        <dbReference type="ChEBI" id="CHEBI:57783"/>
    </ligand>
</feature>
<feature type="binding site" evidence="1">
    <location>
        <position position="7"/>
    </location>
    <ligand>
        <name>NADPH</name>
        <dbReference type="ChEBI" id="CHEBI:57783"/>
    </ligand>
</feature>
<feature type="binding site" evidence="1">
    <location>
        <position position="8"/>
    </location>
    <ligand>
        <name>NADPH</name>
        <dbReference type="ChEBI" id="CHEBI:57783"/>
    </ligand>
</feature>
<feature type="binding site" evidence="1">
    <location>
        <position position="9"/>
    </location>
    <ligand>
        <name>NADPH</name>
        <dbReference type="ChEBI" id="CHEBI:57783"/>
    </ligand>
</feature>
<feature type="binding site" evidence="1">
    <location>
        <position position="32"/>
    </location>
    <ligand>
        <name>NADPH</name>
        <dbReference type="ChEBI" id="CHEBI:57783"/>
    </ligand>
</feature>
<feature type="binding site" evidence="1">
    <location>
        <position position="124"/>
    </location>
    <ligand>
        <name>NADPH</name>
        <dbReference type="ChEBI" id="CHEBI:57783"/>
    </ligand>
</feature>
<feature type="binding site" evidence="1">
    <location>
        <position position="125"/>
    </location>
    <ligand>
        <name>1-deoxy-D-xylulose 5-phosphate</name>
        <dbReference type="ChEBI" id="CHEBI:57792"/>
    </ligand>
</feature>
<feature type="binding site" evidence="1">
    <location>
        <position position="126"/>
    </location>
    <ligand>
        <name>NADPH</name>
        <dbReference type="ChEBI" id="CHEBI:57783"/>
    </ligand>
</feature>
<feature type="binding site" evidence="1">
    <location>
        <position position="148"/>
    </location>
    <ligand>
        <name>Mn(2+)</name>
        <dbReference type="ChEBI" id="CHEBI:29035"/>
    </ligand>
</feature>
<feature type="binding site" evidence="1">
    <location>
        <position position="149"/>
    </location>
    <ligand>
        <name>1-deoxy-D-xylulose 5-phosphate</name>
        <dbReference type="ChEBI" id="CHEBI:57792"/>
    </ligand>
</feature>
<feature type="binding site" evidence="1">
    <location>
        <position position="150"/>
    </location>
    <ligand>
        <name>1-deoxy-D-xylulose 5-phosphate</name>
        <dbReference type="ChEBI" id="CHEBI:57792"/>
    </ligand>
</feature>
<feature type="binding site" evidence="1">
    <location>
        <position position="150"/>
    </location>
    <ligand>
        <name>Mn(2+)</name>
        <dbReference type="ChEBI" id="CHEBI:29035"/>
    </ligand>
</feature>
<feature type="binding site" evidence="1">
    <location>
        <position position="174"/>
    </location>
    <ligand>
        <name>1-deoxy-D-xylulose 5-phosphate</name>
        <dbReference type="ChEBI" id="CHEBI:57792"/>
    </ligand>
</feature>
<feature type="binding site" evidence="1">
    <location>
        <position position="197"/>
    </location>
    <ligand>
        <name>1-deoxy-D-xylulose 5-phosphate</name>
        <dbReference type="ChEBI" id="CHEBI:57792"/>
    </ligand>
</feature>
<feature type="binding site" evidence="1">
    <location>
        <position position="203"/>
    </location>
    <ligand>
        <name>NADPH</name>
        <dbReference type="ChEBI" id="CHEBI:57783"/>
    </ligand>
</feature>
<feature type="binding site" evidence="1">
    <location>
        <position position="210"/>
    </location>
    <ligand>
        <name>1-deoxy-D-xylulose 5-phosphate</name>
        <dbReference type="ChEBI" id="CHEBI:57792"/>
    </ligand>
</feature>
<feature type="binding site" evidence="1">
    <location>
        <position position="215"/>
    </location>
    <ligand>
        <name>1-deoxy-D-xylulose 5-phosphate</name>
        <dbReference type="ChEBI" id="CHEBI:57792"/>
    </ligand>
</feature>
<feature type="binding site" evidence="1">
    <location>
        <position position="216"/>
    </location>
    <ligand>
        <name>1-deoxy-D-xylulose 5-phosphate</name>
        <dbReference type="ChEBI" id="CHEBI:57792"/>
    </ligand>
</feature>
<feature type="binding site" evidence="1">
    <location>
        <position position="219"/>
    </location>
    <ligand>
        <name>1-deoxy-D-xylulose 5-phosphate</name>
        <dbReference type="ChEBI" id="CHEBI:57792"/>
    </ligand>
</feature>
<feature type="binding site" evidence="1">
    <location>
        <position position="219"/>
    </location>
    <ligand>
        <name>Mn(2+)</name>
        <dbReference type="ChEBI" id="CHEBI:29035"/>
    </ligand>
</feature>
<name>DXR_STRAW</name>
<protein>
    <recommendedName>
        <fullName evidence="1">1-deoxy-D-xylulose 5-phosphate reductoisomerase</fullName>
        <shortName evidence="1">DXP reductoisomerase</shortName>
        <ecNumber evidence="1">1.1.1.267</ecNumber>
    </recommendedName>
    <alternativeName>
        <fullName evidence="1">1-deoxyxylulose-5-phosphate reductoisomerase</fullName>
    </alternativeName>
    <alternativeName>
        <fullName evidence="1">2-C-methyl-D-erythritol 4-phosphate synthase</fullName>
    </alternativeName>
</protein>
<dbReference type="EC" id="1.1.1.267" evidence="1"/>
<dbReference type="EMBL" id="BA000030">
    <property type="protein sequence ID" value="BAC70274.1"/>
    <property type="molecule type" value="Genomic_DNA"/>
</dbReference>
<dbReference type="SMR" id="Q82K41"/>
<dbReference type="KEGG" id="sma:SAVERM_2563"/>
<dbReference type="eggNOG" id="COG0743">
    <property type="taxonomic scope" value="Bacteria"/>
</dbReference>
<dbReference type="HOGENOM" id="CLU_035714_4_0_11"/>
<dbReference type="UniPathway" id="UPA00056">
    <property type="reaction ID" value="UER00092"/>
</dbReference>
<dbReference type="Proteomes" id="UP000000428">
    <property type="component" value="Chromosome"/>
</dbReference>
<dbReference type="GO" id="GO:0030604">
    <property type="term" value="F:1-deoxy-D-xylulose-5-phosphate reductoisomerase activity"/>
    <property type="evidence" value="ECO:0007669"/>
    <property type="project" value="UniProtKB-UniRule"/>
</dbReference>
<dbReference type="GO" id="GO:0030145">
    <property type="term" value="F:manganese ion binding"/>
    <property type="evidence" value="ECO:0007669"/>
    <property type="project" value="TreeGrafter"/>
</dbReference>
<dbReference type="GO" id="GO:0070402">
    <property type="term" value="F:NADPH binding"/>
    <property type="evidence" value="ECO:0007669"/>
    <property type="project" value="InterPro"/>
</dbReference>
<dbReference type="GO" id="GO:0051484">
    <property type="term" value="P:isopentenyl diphosphate biosynthetic process, methylerythritol 4-phosphate pathway involved in terpenoid biosynthetic process"/>
    <property type="evidence" value="ECO:0007669"/>
    <property type="project" value="TreeGrafter"/>
</dbReference>
<dbReference type="FunFam" id="3.40.50.720:FF:000045">
    <property type="entry name" value="1-deoxy-D-xylulose 5-phosphate reductoisomerase"/>
    <property type="match status" value="1"/>
</dbReference>
<dbReference type="Gene3D" id="1.10.1740.10">
    <property type="match status" value="1"/>
</dbReference>
<dbReference type="Gene3D" id="3.40.50.720">
    <property type="entry name" value="NAD(P)-binding Rossmann-like Domain"/>
    <property type="match status" value="1"/>
</dbReference>
<dbReference type="HAMAP" id="MF_00183">
    <property type="entry name" value="DXP_reductoisom"/>
    <property type="match status" value="1"/>
</dbReference>
<dbReference type="InterPro" id="IPR003821">
    <property type="entry name" value="DXP_reductoisomerase"/>
</dbReference>
<dbReference type="InterPro" id="IPR013644">
    <property type="entry name" value="DXP_reductoisomerase_C"/>
</dbReference>
<dbReference type="InterPro" id="IPR013512">
    <property type="entry name" value="DXP_reductoisomerase_N"/>
</dbReference>
<dbReference type="InterPro" id="IPR026877">
    <property type="entry name" value="DXPR_C"/>
</dbReference>
<dbReference type="InterPro" id="IPR036169">
    <property type="entry name" value="DXPR_C_sf"/>
</dbReference>
<dbReference type="InterPro" id="IPR036291">
    <property type="entry name" value="NAD(P)-bd_dom_sf"/>
</dbReference>
<dbReference type="NCBIfam" id="TIGR00243">
    <property type="entry name" value="Dxr"/>
    <property type="match status" value="1"/>
</dbReference>
<dbReference type="PANTHER" id="PTHR30525">
    <property type="entry name" value="1-DEOXY-D-XYLULOSE 5-PHOSPHATE REDUCTOISOMERASE"/>
    <property type="match status" value="1"/>
</dbReference>
<dbReference type="PANTHER" id="PTHR30525:SF0">
    <property type="entry name" value="1-DEOXY-D-XYLULOSE 5-PHOSPHATE REDUCTOISOMERASE, CHLOROPLASTIC"/>
    <property type="match status" value="1"/>
</dbReference>
<dbReference type="Pfam" id="PF08436">
    <property type="entry name" value="DXP_redisom_C"/>
    <property type="match status" value="1"/>
</dbReference>
<dbReference type="Pfam" id="PF02670">
    <property type="entry name" value="DXP_reductoisom"/>
    <property type="match status" value="1"/>
</dbReference>
<dbReference type="Pfam" id="PF13288">
    <property type="entry name" value="DXPR_C"/>
    <property type="match status" value="1"/>
</dbReference>
<dbReference type="PIRSF" id="PIRSF006205">
    <property type="entry name" value="Dxp_reductismrs"/>
    <property type="match status" value="1"/>
</dbReference>
<dbReference type="SUPFAM" id="SSF69055">
    <property type="entry name" value="1-deoxy-D-xylulose-5-phosphate reductoisomerase, C-terminal domain"/>
    <property type="match status" value="1"/>
</dbReference>
<dbReference type="SUPFAM" id="SSF55347">
    <property type="entry name" value="Glyceraldehyde-3-phosphate dehydrogenase-like, C-terminal domain"/>
    <property type="match status" value="1"/>
</dbReference>
<dbReference type="SUPFAM" id="SSF51735">
    <property type="entry name" value="NAD(P)-binding Rossmann-fold domains"/>
    <property type="match status" value="1"/>
</dbReference>